<accession>P58091</accession>
<name>PARD1_CAUVC</name>
<comment type="function">
    <text evidence="1 3">Antitoxin component of a type II toxin-antitoxin (TA) system. Neutralizes the effect of cognate toxin ParE1, but no other RelE or ParE toxin. May act as a DNA gyrase inhibitor (By similarity).</text>
</comment>
<comment type="subunit">
    <text evidence="2">Homodimer in solution, forms a ParD1(2)-ParE1(2) heterotetramer.</text>
</comment>
<comment type="disruption phenotype">
    <text evidence="3">Cannot be disrupted, suggesting it is a functional antitoxin. No visible phenotype when the parDE1 operon is deleted.</text>
</comment>
<comment type="similarity">
    <text evidence="4">Belongs to the ParD antitoxin family.</text>
</comment>
<proteinExistence type="evidence at protein level"/>
<protein>
    <recommendedName>
        <fullName>Antitoxin ParD1</fullName>
    </recommendedName>
</protein>
<feature type="chain" id="PRO_0000216351" description="Antitoxin ParD1">
    <location>
        <begin position="1"/>
        <end position="88"/>
    </location>
</feature>
<feature type="strand" evidence="5">
    <location>
        <begin position="6"/>
        <end position="8"/>
    </location>
</feature>
<feature type="helix" evidence="5">
    <location>
        <begin position="12"/>
        <end position="22"/>
    </location>
</feature>
<feature type="turn" evidence="5">
    <location>
        <begin position="23"/>
        <end position="25"/>
    </location>
</feature>
<feature type="helix" evidence="5">
    <location>
        <begin position="30"/>
        <end position="60"/>
    </location>
</feature>
<feature type="strand" evidence="5">
    <location>
        <begin position="63"/>
        <end position="66"/>
    </location>
</feature>
<feature type="helix" evidence="5">
    <location>
        <begin position="69"/>
        <end position="78"/>
    </location>
</feature>
<keyword id="KW-0002">3D-structure</keyword>
<keyword id="KW-1185">Reference proteome</keyword>
<keyword id="KW-1277">Toxin-antitoxin system</keyword>
<organism>
    <name type="scientific">Caulobacter vibrioides (strain ATCC 19089 / CIP 103742 / CB 15)</name>
    <name type="common">Caulobacter crescentus</name>
    <dbReference type="NCBI Taxonomy" id="190650"/>
    <lineage>
        <taxon>Bacteria</taxon>
        <taxon>Pseudomonadati</taxon>
        <taxon>Pseudomonadota</taxon>
        <taxon>Alphaproteobacteria</taxon>
        <taxon>Caulobacterales</taxon>
        <taxon>Caulobacteraceae</taxon>
        <taxon>Caulobacter</taxon>
    </lineage>
</organism>
<dbReference type="EMBL" id="AE005673">
    <property type="protein sequence ID" value="AAK22859.1"/>
    <property type="molecule type" value="Genomic_DNA"/>
</dbReference>
<dbReference type="PIR" id="G87357">
    <property type="entry name" value="G87357"/>
</dbReference>
<dbReference type="RefSeq" id="NP_419691.1">
    <property type="nucleotide sequence ID" value="NC_002696.2"/>
</dbReference>
<dbReference type="RefSeq" id="WP_010918759.1">
    <property type="nucleotide sequence ID" value="NC_002696.2"/>
</dbReference>
<dbReference type="PDB" id="3KXE">
    <property type="method" value="X-ray"/>
    <property type="resolution" value="2.60 A"/>
    <property type="chains" value="C/D=1-88"/>
</dbReference>
<dbReference type="PDBsum" id="3KXE"/>
<dbReference type="SMR" id="P58091"/>
<dbReference type="STRING" id="190650.CC_0874"/>
<dbReference type="EnsemblBacteria" id="AAK22859">
    <property type="protein sequence ID" value="AAK22859"/>
    <property type="gene ID" value="CC_0874"/>
</dbReference>
<dbReference type="KEGG" id="ccr:CC_0874"/>
<dbReference type="PATRIC" id="fig|190650.5.peg.887"/>
<dbReference type="eggNOG" id="COG3609">
    <property type="taxonomic scope" value="Bacteria"/>
</dbReference>
<dbReference type="HOGENOM" id="CLU_144805_2_0_5"/>
<dbReference type="BioCyc" id="CAULO:CC0874-MONOMER"/>
<dbReference type="EvolutionaryTrace" id="P58091"/>
<dbReference type="Proteomes" id="UP000001816">
    <property type="component" value="Chromosome"/>
</dbReference>
<dbReference type="GO" id="GO:0042803">
    <property type="term" value="F:protein homodimerization activity"/>
    <property type="evidence" value="ECO:0000314"/>
    <property type="project" value="UniProtKB"/>
</dbReference>
<dbReference type="GO" id="GO:0051290">
    <property type="term" value="P:protein heterotetramerization"/>
    <property type="evidence" value="ECO:0000314"/>
    <property type="project" value="UniProtKB"/>
</dbReference>
<dbReference type="GO" id="GO:0006355">
    <property type="term" value="P:regulation of DNA-templated transcription"/>
    <property type="evidence" value="ECO:0007669"/>
    <property type="project" value="InterPro"/>
</dbReference>
<dbReference type="CDD" id="cd22231">
    <property type="entry name" value="RHH_NikR_HicB-like"/>
    <property type="match status" value="1"/>
</dbReference>
<dbReference type="Gene3D" id="6.10.10.120">
    <property type="entry name" value="Antitoxin ParD1-like"/>
    <property type="match status" value="1"/>
</dbReference>
<dbReference type="InterPro" id="IPR022789">
    <property type="entry name" value="ParD"/>
</dbReference>
<dbReference type="InterPro" id="IPR038296">
    <property type="entry name" value="ParD_sf"/>
</dbReference>
<dbReference type="InterPro" id="IPR010985">
    <property type="entry name" value="Ribbon_hlx_hlx"/>
</dbReference>
<dbReference type="NCBIfam" id="TIGR02606">
    <property type="entry name" value="antidote_CC2985"/>
    <property type="match status" value="1"/>
</dbReference>
<dbReference type="PANTHER" id="PTHR36582">
    <property type="entry name" value="ANTITOXIN PARD"/>
    <property type="match status" value="1"/>
</dbReference>
<dbReference type="PANTHER" id="PTHR36582:SF2">
    <property type="entry name" value="ANTITOXIN PARD"/>
    <property type="match status" value="1"/>
</dbReference>
<dbReference type="Pfam" id="PF03693">
    <property type="entry name" value="ParD_antitoxin"/>
    <property type="match status" value="1"/>
</dbReference>
<dbReference type="SUPFAM" id="SSF47598">
    <property type="entry name" value="Ribbon-helix-helix"/>
    <property type="match status" value="1"/>
</dbReference>
<sequence length="88" mass="9636">MASKNTSVVLGDHFQAFIDSQVADGRYGSASEVIRAGLRLLEENEAKLAALRAALIEGEESGFIEDFDFDAFIEERSRASAPQGFHEE</sequence>
<evidence type="ECO:0000250" key="1"/>
<evidence type="ECO:0000269" key="2">
    <source>
    </source>
</evidence>
<evidence type="ECO:0000269" key="3">
    <source>
    </source>
</evidence>
<evidence type="ECO:0000305" key="4"/>
<evidence type="ECO:0007829" key="5">
    <source>
        <dbReference type="PDB" id="3KXE"/>
    </source>
</evidence>
<reference key="1">
    <citation type="journal article" date="2001" name="Proc. Natl. Acad. Sci. U.S.A.">
        <title>Complete genome sequence of Caulobacter crescentus.</title>
        <authorList>
            <person name="Nierman W.C."/>
            <person name="Feldblyum T.V."/>
            <person name="Laub M.T."/>
            <person name="Paulsen I.T."/>
            <person name="Nelson K.E."/>
            <person name="Eisen J.A."/>
            <person name="Heidelberg J.F."/>
            <person name="Alley M.R.K."/>
            <person name="Ohta N."/>
            <person name="Maddock J.R."/>
            <person name="Potocka I."/>
            <person name="Nelson W.C."/>
            <person name="Newton A."/>
            <person name="Stephens C."/>
            <person name="Phadke N.D."/>
            <person name="Ely B."/>
            <person name="DeBoy R.T."/>
            <person name="Dodson R.J."/>
            <person name="Durkin A.S."/>
            <person name="Gwinn M.L."/>
            <person name="Haft D.H."/>
            <person name="Kolonay J.F."/>
            <person name="Smit J."/>
            <person name="Craven M.B."/>
            <person name="Khouri H.M."/>
            <person name="Shetty J."/>
            <person name="Berry K.J."/>
            <person name="Utterback T.R."/>
            <person name="Tran K."/>
            <person name="Wolf A.M."/>
            <person name="Vamathevan J.J."/>
            <person name="Ermolaeva M.D."/>
            <person name="White O."/>
            <person name="Salzberg S.L."/>
            <person name="Venter J.C."/>
            <person name="Shapiro L."/>
            <person name="Fraser C.M."/>
        </authorList>
    </citation>
    <scope>NUCLEOTIDE SEQUENCE [LARGE SCALE GENOMIC DNA]</scope>
    <source>
        <strain>ATCC 19089 / CIP 103742 / CB 15</strain>
    </source>
</reference>
<reference key="2">
    <citation type="journal article" date="2005" name="Nucleic Acids Res.">
        <title>Toxin-antitoxin loci are highly abundant in free-living but lost from host-associated prokaryotes.</title>
        <authorList>
            <person name="Pandey D.P."/>
            <person name="Gerdes K."/>
        </authorList>
    </citation>
    <scope>POSSIBLE FUNCTION</scope>
    <source>
        <strain>ATCC 19089 / CIP 103742 / CB 15</strain>
    </source>
</reference>
<reference key="3">
    <citation type="journal article" date="2010" name="Mol. Microbiol.">
        <title>Interaction specificity, toxicity and regulation of a paralogous set of ParE/RelE-family toxin-antitoxin systems.</title>
        <authorList>
            <person name="Fiebig A."/>
            <person name="Castro Rojas C.M."/>
            <person name="Siegal-Gaskins D."/>
            <person name="Crosson S."/>
        </authorList>
    </citation>
    <scope>FUNCTION AS AN ANTITOXIN</scope>
    <scope>DISRUPTION PHENOTYPE</scope>
    <source>
        <strain>ATCC 19089 / CIP 103742 / CB 15</strain>
    </source>
</reference>
<reference key="4">
    <citation type="journal article" date="2010" name="Biochemistry">
        <title>A conserved mode of protein recognition and binding in a ParD-ParE toxin-antitoxin complex.</title>
        <authorList>
            <person name="Dalton K.M."/>
            <person name="Crosson S."/>
        </authorList>
    </citation>
    <scope>X-RAY CRYSTALLOGRAPHY (2.60 ANGSTROMS)</scope>
    <scope>SUBUNIT</scope>
    <source>
        <strain>ATCC 19089 / CIP 103742 / CB 15</strain>
    </source>
</reference>
<gene>
    <name type="primary">parD1</name>
    <name type="ordered locus">CC_0874</name>
</gene>